<feature type="chain" id="PRO_0000343987" description="Translocator protein BipB">
    <location>
        <begin position="1"/>
        <end position="620"/>
    </location>
</feature>
<feature type="transmembrane region" description="Helical" evidence="2">
    <location>
        <begin position="355"/>
        <end position="375"/>
    </location>
</feature>
<feature type="transmembrane region" description="Helical" evidence="2">
    <location>
        <begin position="401"/>
        <end position="421"/>
    </location>
</feature>
<feature type="transmembrane region" description="Helical" evidence="2">
    <location>
        <begin position="430"/>
        <end position="450"/>
    </location>
</feature>
<feature type="region of interest" description="Disordered" evidence="3">
    <location>
        <begin position="58"/>
        <end position="95"/>
    </location>
</feature>
<feature type="coiled-coil region" evidence="2">
    <location>
        <begin position="309"/>
        <end position="339"/>
    </location>
</feature>
<feature type="compositionally biased region" description="Basic and acidic residues" evidence="3">
    <location>
        <begin position="66"/>
        <end position="84"/>
    </location>
</feature>
<accession>A3MCG8</accession>
<evidence type="ECO:0000250" key="1"/>
<evidence type="ECO:0000255" key="2"/>
<evidence type="ECO:0000256" key="3">
    <source>
        <dbReference type="SAM" id="MobiDB-lite"/>
    </source>
</evidence>
<evidence type="ECO:0000305" key="4"/>
<gene>
    <name type="primary">bipB</name>
    <name type="ordered locus">BMA10247_A0753</name>
</gene>
<proteinExistence type="inferred from homology"/>
<organism>
    <name type="scientific">Burkholderia mallei (strain NCTC 10247)</name>
    <dbReference type="NCBI Taxonomy" id="320389"/>
    <lineage>
        <taxon>Bacteria</taxon>
        <taxon>Pseudomonadati</taxon>
        <taxon>Pseudomonadota</taxon>
        <taxon>Betaproteobacteria</taxon>
        <taxon>Burkholderiales</taxon>
        <taxon>Burkholderiaceae</taxon>
        <taxon>Burkholderia</taxon>
        <taxon>pseudomallei group</taxon>
    </lineage>
</organism>
<sequence>MSSGVQGGPAANANAYQTHPLRDAASALGTLSPQAYVDVVSAAQRNFLERMSQLASEQCDAQPAAHDARLDDRPALRAPQERDAPPLGASDTGSRASGAAKLTELLGVLMSVISASSLDELKQRSDIWNQMSKAAQDNLSRLSDAFQRATDEAKAAADAAEQAAAAAKQAGADAKAADAAVDAAQKRYDDAVKQGLPDDRLQSLKAALEQARQQAGDAHGRADALQADATKKLDAASALATQARACEQQVDDAVNQATQQYGASASLRTPQSPRLSGAAELTAVLGKLQELISSGNVKELESKQKLFTEMQAKREAELQKKSDEYQAQVKKAEEMQKTMGCIGKIVGWVITAVSFAAAAFTGGASLALAAVGLALAVGDEISRATTGVSFMDKLMQPVMDAILKPLMEMISSLITKALVACGVDQQKAELAGAILGAVVTGVALVAAAFVGASAVKAVASKVIDAMAGQLTKLMDSAIGKMLVQLIEKFSEKSGLQALGSRTATAMTRMRRAIGVEAKEDGMLLANRFEKAGTVMNVGNQVSQAAGGIVVGVERAKAMGLLADVKEAMYDIKLLGDLLKQAVDAFAEHNRVLAQLMQQMSDAGEMQTSTGKLILRNARAV</sequence>
<keyword id="KW-0175">Coiled coil</keyword>
<keyword id="KW-1043">Host membrane</keyword>
<keyword id="KW-0472">Membrane</keyword>
<keyword id="KW-0964">Secreted</keyword>
<keyword id="KW-0812">Transmembrane</keyword>
<keyword id="KW-1133">Transmembrane helix</keyword>
<keyword id="KW-0843">Virulence</keyword>
<dbReference type="EMBL" id="CP000547">
    <property type="protein sequence ID" value="ABO03246.1"/>
    <property type="molecule type" value="Genomic_DNA"/>
</dbReference>
<dbReference type="RefSeq" id="WP_004533397.1">
    <property type="nucleotide sequence ID" value="NZ_CP007801.1"/>
</dbReference>
<dbReference type="SMR" id="A3MCG8"/>
<dbReference type="GeneID" id="93063712"/>
<dbReference type="KEGG" id="bmaz:BM44_4992"/>
<dbReference type="KEGG" id="bmn:BMA10247_A0753"/>
<dbReference type="PATRIC" id="fig|320389.8.peg.5728"/>
<dbReference type="GO" id="GO:0005576">
    <property type="term" value="C:extracellular region"/>
    <property type="evidence" value="ECO:0007669"/>
    <property type="project" value="UniProtKB-SubCell"/>
</dbReference>
<dbReference type="GO" id="GO:0033644">
    <property type="term" value="C:host cell membrane"/>
    <property type="evidence" value="ECO:0007669"/>
    <property type="project" value="UniProtKB-SubCell"/>
</dbReference>
<dbReference type="GO" id="GO:0016020">
    <property type="term" value="C:membrane"/>
    <property type="evidence" value="ECO:0007669"/>
    <property type="project" value="UniProtKB-KW"/>
</dbReference>
<dbReference type="Gene3D" id="1.20.120.330">
    <property type="entry name" value="Nucleotidyltransferases domain 2"/>
    <property type="match status" value="2"/>
</dbReference>
<dbReference type="InterPro" id="IPR006972">
    <property type="entry name" value="BipB-like_C"/>
</dbReference>
<dbReference type="InterPro" id="IPR032391">
    <property type="entry name" value="IpaB/BipB/SctE_N"/>
</dbReference>
<dbReference type="InterPro" id="IPR003895">
    <property type="entry name" value="T3SS_SctE/BipB"/>
</dbReference>
<dbReference type="Pfam" id="PF04888">
    <property type="entry name" value="SseC"/>
    <property type="match status" value="1"/>
</dbReference>
<dbReference type="Pfam" id="PF16535">
    <property type="entry name" value="T3SSipB"/>
    <property type="match status" value="1"/>
</dbReference>
<dbReference type="PRINTS" id="PR01375">
    <property type="entry name" value="BACINVASINB"/>
</dbReference>
<comment type="function">
    <text evidence="1">Plays a role in the bacterium-induced formation of multinucleated giant cell (MNGC), which is formed after host cell fusion, as well as in the intercellular spreading of bacteria and in the induction of apoptosis in macrophages. May act in concert with other effector proteins to induce fusion of host cell membranes (By similarity).</text>
</comment>
<comment type="subcellular location">
    <subcellularLocation>
        <location evidence="1">Secreted</location>
    </subcellularLocation>
    <subcellularLocation>
        <location evidence="1">Host membrane</location>
    </subcellularLocation>
    <text evidence="1">Secreted via the bsa type III secretion system, and probably inserted into host membranes.</text>
</comment>
<comment type="similarity">
    <text evidence="4">Belongs to the SctE/SipB/YopB family.</text>
</comment>
<protein>
    <recommendedName>
        <fullName>Translocator protein BipB</fullName>
    </recommendedName>
</protein>
<name>BIPB_BURM7</name>
<reference key="1">
    <citation type="journal article" date="2010" name="Genome Biol. Evol.">
        <title>Continuing evolution of Burkholderia mallei through genome reduction and large-scale rearrangements.</title>
        <authorList>
            <person name="Losada L."/>
            <person name="Ronning C.M."/>
            <person name="DeShazer D."/>
            <person name="Woods D."/>
            <person name="Fedorova N."/>
            <person name="Kim H.S."/>
            <person name="Shabalina S.A."/>
            <person name="Pearson T.R."/>
            <person name="Brinkac L."/>
            <person name="Tan P."/>
            <person name="Nandi T."/>
            <person name="Crabtree J."/>
            <person name="Badger J."/>
            <person name="Beckstrom-Sternberg S."/>
            <person name="Saqib M."/>
            <person name="Schutzer S.E."/>
            <person name="Keim P."/>
            <person name="Nierman W.C."/>
        </authorList>
    </citation>
    <scope>NUCLEOTIDE SEQUENCE [LARGE SCALE GENOMIC DNA]</scope>
    <source>
        <strain>NCTC 10247</strain>
    </source>
</reference>